<gene>
    <name evidence="1" type="primary">frr</name>
    <name type="ordered locus">CHAB381_0361</name>
</gene>
<accession>A7I0C2</accession>
<dbReference type="EMBL" id="CP000776">
    <property type="protein sequence ID" value="ABS52108.1"/>
    <property type="molecule type" value="Genomic_DNA"/>
</dbReference>
<dbReference type="RefSeq" id="WP_012108245.1">
    <property type="nucleotide sequence ID" value="NC_009714.1"/>
</dbReference>
<dbReference type="SMR" id="A7I0C2"/>
<dbReference type="STRING" id="360107.CHAB381_0361"/>
<dbReference type="KEGG" id="cha:CHAB381_0361"/>
<dbReference type="eggNOG" id="COG0233">
    <property type="taxonomic scope" value="Bacteria"/>
</dbReference>
<dbReference type="HOGENOM" id="CLU_073981_2_0_7"/>
<dbReference type="OrthoDB" id="9804006at2"/>
<dbReference type="Proteomes" id="UP000002407">
    <property type="component" value="Chromosome"/>
</dbReference>
<dbReference type="GO" id="GO:0005829">
    <property type="term" value="C:cytosol"/>
    <property type="evidence" value="ECO:0007669"/>
    <property type="project" value="GOC"/>
</dbReference>
<dbReference type="GO" id="GO:0043023">
    <property type="term" value="F:ribosomal large subunit binding"/>
    <property type="evidence" value="ECO:0007669"/>
    <property type="project" value="TreeGrafter"/>
</dbReference>
<dbReference type="GO" id="GO:0002184">
    <property type="term" value="P:cytoplasmic translational termination"/>
    <property type="evidence" value="ECO:0007669"/>
    <property type="project" value="TreeGrafter"/>
</dbReference>
<dbReference type="CDD" id="cd00520">
    <property type="entry name" value="RRF"/>
    <property type="match status" value="1"/>
</dbReference>
<dbReference type="FunFam" id="1.10.132.20:FF:000001">
    <property type="entry name" value="Ribosome-recycling factor"/>
    <property type="match status" value="1"/>
</dbReference>
<dbReference type="FunFam" id="3.30.1360.40:FF:000001">
    <property type="entry name" value="Ribosome-recycling factor"/>
    <property type="match status" value="1"/>
</dbReference>
<dbReference type="Gene3D" id="3.30.1360.40">
    <property type="match status" value="1"/>
</dbReference>
<dbReference type="Gene3D" id="1.10.132.20">
    <property type="entry name" value="Ribosome-recycling factor"/>
    <property type="match status" value="1"/>
</dbReference>
<dbReference type="HAMAP" id="MF_00040">
    <property type="entry name" value="RRF"/>
    <property type="match status" value="1"/>
</dbReference>
<dbReference type="InterPro" id="IPR002661">
    <property type="entry name" value="Ribosome_recyc_fac"/>
</dbReference>
<dbReference type="InterPro" id="IPR023584">
    <property type="entry name" value="Ribosome_recyc_fac_dom"/>
</dbReference>
<dbReference type="InterPro" id="IPR036191">
    <property type="entry name" value="RRF_sf"/>
</dbReference>
<dbReference type="NCBIfam" id="TIGR00496">
    <property type="entry name" value="frr"/>
    <property type="match status" value="1"/>
</dbReference>
<dbReference type="PANTHER" id="PTHR20982:SF3">
    <property type="entry name" value="MITOCHONDRIAL RIBOSOME RECYCLING FACTOR PSEUDO 1"/>
    <property type="match status" value="1"/>
</dbReference>
<dbReference type="PANTHER" id="PTHR20982">
    <property type="entry name" value="RIBOSOME RECYCLING FACTOR"/>
    <property type="match status" value="1"/>
</dbReference>
<dbReference type="Pfam" id="PF01765">
    <property type="entry name" value="RRF"/>
    <property type="match status" value="1"/>
</dbReference>
<dbReference type="SUPFAM" id="SSF55194">
    <property type="entry name" value="Ribosome recycling factor, RRF"/>
    <property type="match status" value="1"/>
</dbReference>
<feature type="chain" id="PRO_1000003131" description="Ribosome-recycling factor">
    <location>
        <begin position="1"/>
        <end position="185"/>
    </location>
</feature>
<reference key="1">
    <citation type="submission" date="2007-07" db="EMBL/GenBank/DDBJ databases">
        <title>Complete genome sequence of Campylobacter hominis ATCC BAA-381, a commensal isolated from the human gastrointestinal tract.</title>
        <authorList>
            <person name="Fouts D.E."/>
            <person name="Mongodin E.F."/>
            <person name="Puiu D."/>
            <person name="Sebastian Y."/>
            <person name="Miller W.G."/>
            <person name="Mandrell R.E."/>
            <person name="Nelson K.E."/>
        </authorList>
    </citation>
    <scope>NUCLEOTIDE SEQUENCE [LARGE SCALE GENOMIC DNA]</scope>
    <source>
        <strain>ATCC BAA-381 / DSM 21671 / CCUG 45161 / LMG 19568 / NCTC 13146 / CH001A</strain>
    </source>
</reference>
<organism>
    <name type="scientific">Campylobacter hominis (strain ATCC BAA-381 / DSM 21671 / CCUG 45161 / LMG 19568 / NCTC 13146 / CH001A)</name>
    <dbReference type="NCBI Taxonomy" id="360107"/>
    <lineage>
        <taxon>Bacteria</taxon>
        <taxon>Pseudomonadati</taxon>
        <taxon>Campylobacterota</taxon>
        <taxon>Epsilonproteobacteria</taxon>
        <taxon>Campylobacterales</taxon>
        <taxon>Campylobacteraceae</taxon>
        <taxon>Campylobacter</taxon>
    </lineage>
</organism>
<proteinExistence type="inferred from homology"/>
<keyword id="KW-0963">Cytoplasm</keyword>
<keyword id="KW-0648">Protein biosynthesis</keyword>
<keyword id="KW-1185">Reference proteome</keyword>
<sequence>MLNSVYDAQKSDCNKALNALKRDFSTLRTGKVSVKILENIFVDYYDNQTPLNQVATVLATDATTISVTPWEKSMLKGIESAIAAANIGVNPTNDGESVKLFFPPMTTEQRKENAKKAKAMGEKAKVSIRNIRKDANDGVKKLEKDKSISEDEAKKAYDEVQKITDNFIEKIDEAVKNKEEELLKV</sequence>
<name>RRF_CAMHC</name>
<comment type="function">
    <text evidence="1">Responsible for the release of ribosomes from messenger RNA at the termination of protein biosynthesis. May increase the efficiency of translation by recycling ribosomes from one round of translation to another.</text>
</comment>
<comment type="subcellular location">
    <subcellularLocation>
        <location evidence="1">Cytoplasm</location>
    </subcellularLocation>
</comment>
<comment type="similarity">
    <text evidence="1">Belongs to the RRF family.</text>
</comment>
<protein>
    <recommendedName>
        <fullName evidence="1">Ribosome-recycling factor</fullName>
        <shortName evidence="1">RRF</shortName>
    </recommendedName>
    <alternativeName>
        <fullName evidence="1">Ribosome-releasing factor</fullName>
    </alternativeName>
</protein>
<evidence type="ECO:0000255" key="1">
    <source>
        <dbReference type="HAMAP-Rule" id="MF_00040"/>
    </source>
</evidence>